<name>LGB2_SOYBN</name>
<gene>
    <name evidence="12" type="primary">LB2</name>
    <name evidence="13" type="synonym">GLB2-3</name>
    <name evidence="11 13" type="synonym">LBC1</name>
    <name evidence="17" type="ordered locus">Glyma_10G199000</name>
</gene>
<protein>
    <recommendedName>
        <fullName evidence="12">Leghemoglobin 2</fullName>
        <shortName evidence="12">GmLb2</shortName>
    </recommendedName>
    <alternativeName>
        <fullName evidence="13">Hemoglobin 2-3</fullName>
        <shortName evidence="13">GmGLB2-3</shortName>
    </alternativeName>
    <alternativeName>
        <fullName evidence="13 14">Leghemoglobin C1</fullName>
        <shortName evidence="11">GmLbc1</shortName>
    </alternativeName>
    <alternativeName>
        <fullName evidence="14">Nodulin-50</fullName>
        <shortName evidence="14">N-50</shortName>
    </alternativeName>
</protein>
<organism>
    <name type="scientific">Glycine max</name>
    <name type="common">Soybean</name>
    <name type="synonym">Glycine hispida</name>
    <dbReference type="NCBI Taxonomy" id="3847"/>
    <lineage>
        <taxon>Eukaryota</taxon>
        <taxon>Viridiplantae</taxon>
        <taxon>Streptophyta</taxon>
        <taxon>Embryophyta</taxon>
        <taxon>Tracheophyta</taxon>
        <taxon>Spermatophyta</taxon>
        <taxon>Magnoliopsida</taxon>
        <taxon>eudicotyledons</taxon>
        <taxon>Gunneridae</taxon>
        <taxon>Pentapetalae</taxon>
        <taxon>rosids</taxon>
        <taxon>fabids</taxon>
        <taxon>Fabales</taxon>
        <taxon>Fabaceae</taxon>
        <taxon>Papilionoideae</taxon>
        <taxon>50 kb inversion clade</taxon>
        <taxon>NPAAA clade</taxon>
        <taxon>indigoferoid/millettioid clade</taxon>
        <taxon>Phaseoleae</taxon>
        <taxon>Glycine</taxon>
        <taxon>Glycine subgen. Soja</taxon>
    </lineage>
</organism>
<reference key="1">
    <citation type="journal article" date="1982" name="Nucleic Acids Res.">
        <title>The primary structures of two leghemoglobin genes from soybean.</title>
        <authorList>
            <person name="Hyldig-Nielsen J.J."/>
            <person name="Jensen E.O."/>
            <person name="Paludan K."/>
            <person name="Wiborg O."/>
            <person name="Garrett R."/>
            <person name="Joergensen P."/>
            <person name="Marcker K.A."/>
        </authorList>
    </citation>
    <scope>NUCLEOTIDE SEQUENCE [GENOMIC DNA]</scope>
</reference>
<reference key="2">
    <citation type="journal article" date="2010" name="Nature">
        <title>Genome sequence of the palaeopolyploid soybean.</title>
        <authorList>
            <person name="Schmutz J."/>
            <person name="Cannon S.B."/>
            <person name="Schlueter J."/>
            <person name="Ma J."/>
            <person name="Mitros T."/>
            <person name="Nelson W."/>
            <person name="Hyten D.L."/>
            <person name="Song Q."/>
            <person name="Thelen J.J."/>
            <person name="Cheng J."/>
            <person name="Xu D."/>
            <person name="Hellsten U."/>
            <person name="May G.D."/>
            <person name="Yu Y."/>
            <person name="Sakurai T."/>
            <person name="Umezawa T."/>
            <person name="Bhattacharyya M.K."/>
            <person name="Sandhu D."/>
            <person name="Valliyodan B."/>
            <person name="Lindquist E."/>
            <person name="Peto M."/>
            <person name="Grant D."/>
            <person name="Shu S."/>
            <person name="Goodstein D."/>
            <person name="Barry K."/>
            <person name="Futrell-Griggs M."/>
            <person name="Abernathy B."/>
            <person name="Du J."/>
            <person name="Tian Z."/>
            <person name="Zhu L."/>
            <person name="Gill N."/>
            <person name="Joshi T."/>
            <person name="Libault M."/>
            <person name="Sethuraman A."/>
            <person name="Zhang X.-C."/>
            <person name="Shinozaki K."/>
            <person name="Nguyen H.T."/>
            <person name="Wing R.A."/>
            <person name="Cregan P."/>
            <person name="Specht J."/>
            <person name="Grimwood J."/>
            <person name="Rokhsar D."/>
            <person name="Stacey G."/>
            <person name="Shoemaker R.C."/>
            <person name="Jackson S.A."/>
        </authorList>
    </citation>
    <scope>NUCLEOTIDE SEQUENCE [LARGE SCALE GENOMIC DNA]</scope>
    <source>
        <strain>cv. Williams 82</strain>
        <tissue>Callus</tissue>
    </source>
</reference>
<reference key="3">
    <citation type="journal article" date="2007" name="Gene">
        <title>Plant hemoglobins: what we know six decades after their discovery.</title>
        <authorList>
            <person name="Garrocho-Villegas V."/>
            <person name="Gopalasubramaniam S.K."/>
            <person name="Arredondo-Peter R."/>
        </authorList>
    </citation>
    <scope>REVIEW ON PHYTOGLOBINS</scope>
</reference>
<reference key="4">
    <citation type="journal article" date="2007" name="Microbiology">
        <title>The contribution of bacteroidal nitrate and nitrite reduction to the formation of nitrosylleghaemoglobin complexes in soybean root nodules.</title>
        <authorList>
            <person name="Meakin G.E."/>
            <person name="Bueno E."/>
            <person name="Jepson B."/>
            <person name="Bedmar E.J."/>
            <person name="Richardson D.J."/>
            <person name="Delgado M.J."/>
        </authorList>
    </citation>
    <scope>NITRATION</scope>
    <scope>UV-VISIBLE SPECTROSCOPY</scope>
    <scope>ELECTRON PARAMAGNETIC RESONANCE</scope>
    <source>
        <strain>cv. Williams</strain>
    </source>
</reference>
<reference key="5">
    <citation type="journal article" date="2008" name="Colloids Surf. B Biointerfaces">
        <title>Soil applied cobalt alters the nodulation, leg-haemoglobin content and antioxidant status of Glycine max (L.) Merr.</title>
        <authorList>
            <person name="Jayakumar K."/>
            <person name="Vijayarengan P."/>
            <person name="Changxing Z."/>
            <person name="Gomathinayagam M."/>
            <person name="Jaleel C.A."/>
        </authorList>
    </citation>
    <scope>REPRESSION BY COBALT</scope>
</reference>
<reference key="6">
    <citation type="journal article" date="2012" name="Proc. Natl. Acad. Sci. U.S.A.">
        <title>Leghemoglobin green derivatives with nitrated hemes evidence production of highly reactive nitrogen species during aging of legume nodules.</title>
        <authorList>
            <person name="Navascues J."/>
            <person name="Perez-Rontome C."/>
            <person name="Gay M."/>
            <person name="Marcos M."/>
            <person name="Yang F."/>
            <person name="Walker F.A."/>
            <person name="Desbois A."/>
            <person name="Abian J."/>
            <person name="Becana M."/>
        </authorList>
    </citation>
    <scope>FUNCTION</scope>
    <scope>NITRATION</scope>
    <scope>UV-VISIBLE; MASS SPECTROMETRY; NMR AND RESONANCE RAMAN SPECTROSCOPIES</scope>
    <scope>ACETYLATION AT GLY-2</scope>
    <source>
        <strain>cv. Hobbit</strain>
        <strain>cv. Williams</strain>
    </source>
</reference>
<reference key="7">
    <citation type="journal article" date="2015" name="Plant J.">
        <title>Leghemoglobin is nitrated in functional legume nodules in a tyrosine residue within the heme cavity by a nitrite/peroxide-dependent mechanism.</title>
        <authorList>
            <person name="Sainz M."/>
            <person name="Calvo-Begueria L."/>
            <person name="Perez-Rontome C."/>
            <person name="Wienkoop S."/>
            <person name="Abian J."/>
            <person name="Staudinger C."/>
            <person name="Bartesaghi S."/>
            <person name="Radi R."/>
            <person name="Becana M."/>
        </authorList>
    </citation>
    <scope>NITRATION AT TYR-26; TYR-31 AND TYR-134</scope>
</reference>
<reference key="8">
    <citation type="journal article" date="2020" name="Ann. Bot.">
        <title>Excess nitrate induces nodule greening and reduces transcript and protein expression levels of soybean leghaemoglobins.</title>
        <authorList>
            <person name="Du M."/>
            <person name="Gao Z."/>
            <person name="Li X."/>
            <person name="Liao H."/>
        </authorList>
    </citation>
    <scope>FUNCTION</scope>
    <scope>TISSUE SPECIFICITY</scope>
    <scope>DEVELOPMENTAL STAGE</scope>
    <scope>SUPPRESSED BY NITROGEN</scope>
    <scope>GENE FAMILY</scope>
    <scope>NOMENCLATURE</scope>
    <source>
        <strain>cv. HN66</strain>
    </source>
</reference>
<reference key="9">
    <citation type="journal article" date="2022" name="Gene">
        <title>Uncovering the roles of hemoglobins in soybean facing water stress.</title>
        <authorList>
            <person name="Koltun A."/>
            <person name="Fuhrmann-Aoyagi M.B."/>
            <person name="Cardoso Moraes L.A."/>
            <person name="Lima Nepomuceno A."/>
            <person name="Simoes Azeredo Goncalves L."/>
            <person name="Mertz-Henning L.M."/>
        </authorList>
    </citation>
    <scope>GENE FAMILY</scope>
    <scope>NOMENCLATURE</scope>
    <source>
        <strain>cv. BR-4</strain>
        <strain>cv. Embrapa 45</strain>
    </source>
</reference>
<comment type="function">
    <text evidence="3 7 9 10">Leghemoglobin that reversibly binds oxygen O(2) through a pentacoordinated heme iron (By similarity). In root nodules, facilitates the diffusion of oxygen to the bacteroids while preventing the bacterial nitrogenase from being inactivated by buffering dioxygen, nitric oxide and carbon monoxide, and promoting the formation of reactive oxygen species (ROS, e.g. H(2)O(2)) (PubMed:17540516, PubMed:22308405, PubMed:32297921). This role is essential for symbiotic nitrogen fixation (SNF) (PubMed:17540516, PubMed:32297921).</text>
</comment>
<comment type="subunit">
    <text evidence="1">Monomer.</text>
</comment>
<comment type="subcellular location">
    <subcellularLocation>
        <location evidence="1">Cytoplasm</location>
        <location evidence="1">Cytosol</location>
    </subcellularLocation>
    <subcellularLocation>
        <location evidence="1">Nucleus</location>
    </subcellularLocation>
</comment>
<comment type="tissue specificity">
    <text evidence="9">Specifically expressed in root nodules, and barely in pods.</text>
</comment>
<comment type="developmental stage">
    <text evidence="9">Gradual accumulation in developping and maturating root nodules (PubMed:32297921). Levels decline during nodule senescence (PubMed:32297921).</text>
</comment>
<comment type="induction">
    <text evidence="6 9">Negatively regulated by cobalt (Co) in a dose-dependent manner (PubMed:18838253). Suppressed by exposure to excess nitrogen (N); this repression is associated with nodule greening and reduced biological nitrogen fixation (BN) efficiency (PubMed:32297921).</text>
</comment>
<comment type="PTM">
    <text evidence="5 7 8">Nitrated mainly at Tyr-31 and, to a lower extent, at Tyr-26 and Tyr-134, in effective nodules and particularly in hypoxic conditions; this mechanism may play a protective role in the symbiosis by buffering toxic peroxynitrite NO(2)(-) (PubMed:17259612, PubMed:22308405, PubMed:25603991). Nitration level decrease during nodule senescence (PubMed:17259612, PubMed:25603991).</text>
</comment>
<comment type="PTM">
    <text evidence="2">Phosphorylation at Ser-46 disrupts the molecular environment of its porphyrin ring oxygen binding pocket, thus leading to a reduced oxygen consumption and to the delivery of oxygen O(2) to symbiosomes.</text>
</comment>
<comment type="miscellaneous">
    <text>Five leghemoglobin genes have been isolated. This sequence is tentatively identified as C1.</text>
</comment>
<comment type="similarity">
    <text evidence="15">Belongs to the plant globin family.</text>
</comment>
<dbReference type="EMBL" id="V00452">
    <property type="protein sequence ID" value="CAA23730.1"/>
    <property type="molecule type" value="Genomic_DNA"/>
</dbReference>
<dbReference type="EMBL" id="CM000843">
    <property type="protein sequence ID" value="KRH34686.1"/>
    <property type="molecule type" value="Genomic_DNA"/>
</dbReference>
<dbReference type="PIR" id="A02557">
    <property type="entry name" value="GPSYC1"/>
</dbReference>
<dbReference type="RefSeq" id="NP_001345001.1">
    <property type="nucleotide sequence ID" value="NM_001358072.1"/>
</dbReference>
<dbReference type="SMR" id="P02235"/>
<dbReference type="STRING" id="3847.P02235"/>
<dbReference type="PaxDb" id="3847-GLYMA10G34280.1"/>
<dbReference type="ProMEX" id="P02235"/>
<dbReference type="EnsemblPlants" id="KRH34686">
    <property type="protein sequence ID" value="KRH34686"/>
    <property type="gene ID" value="GLYMA_10G199000"/>
</dbReference>
<dbReference type="GeneID" id="100785236"/>
<dbReference type="Gramene" id="KRH34686">
    <property type="protein sequence ID" value="KRH34686"/>
    <property type="gene ID" value="GLYMA_10G199000"/>
</dbReference>
<dbReference type="eggNOG" id="KOG3378">
    <property type="taxonomic scope" value="Eukaryota"/>
</dbReference>
<dbReference type="HOGENOM" id="CLU_003827_11_2_1"/>
<dbReference type="InParanoid" id="P02235"/>
<dbReference type="OMA" id="AWKVAYD"/>
<dbReference type="OrthoDB" id="2012505at2759"/>
<dbReference type="Proteomes" id="UP000008827">
    <property type="component" value="Chromosome 10"/>
</dbReference>
<dbReference type="GO" id="GO:0005829">
    <property type="term" value="C:cytosol"/>
    <property type="evidence" value="ECO:0007669"/>
    <property type="project" value="UniProtKB-SubCell"/>
</dbReference>
<dbReference type="GO" id="GO:0005634">
    <property type="term" value="C:nucleus"/>
    <property type="evidence" value="ECO:0007669"/>
    <property type="project" value="UniProtKB-SubCell"/>
</dbReference>
<dbReference type="GO" id="GO:0020037">
    <property type="term" value="F:heme binding"/>
    <property type="evidence" value="ECO:0007669"/>
    <property type="project" value="InterPro"/>
</dbReference>
<dbReference type="GO" id="GO:0046872">
    <property type="term" value="F:metal ion binding"/>
    <property type="evidence" value="ECO:0007669"/>
    <property type="project" value="UniProtKB-KW"/>
</dbReference>
<dbReference type="GO" id="GO:0019825">
    <property type="term" value="F:oxygen binding"/>
    <property type="evidence" value="ECO:0007669"/>
    <property type="project" value="InterPro"/>
</dbReference>
<dbReference type="GO" id="GO:0005344">
    <property type="term" value="F:oxygen carrier activity"/>
    <property type="evidence" value="ECO:0007669"/>
    <property type="project" value="UniProtKB-KW"/>
</dbReference>
<dbReference type="GO" id="GO:0009877">
    <property type="term" value="P:nodulation"/>
    <property type="evidence" value="ECO:0000314"/>
    <property type="project" value="UniProtKB"/>
</dbReference>
<dbReference type="GO" id="GO:0032025">
    <property type="term" value="P:response to cobalt ion"/>
    <property type="evidence" value="ECO:0000270"/>
    <property type="project" value="UniProtKB"/>
</dbReference>
<dbReference type="GO" id="GO:1901698">
    <property type="term" value="P:response to nitrogen compound"/>
    <property type="evidence" value="ECO:0000270"/>
    <property type="project" value="UniProtKB"/>
</dbReference>
<dbReference type="Gene3D" id="1.10.490.10">
    <property type="entry name" value="Globins"/>
    <property type="match status" value="1"/>
</dbReference>
<dbReference type="InterPro" id="IPR000971">
    <property type="entry name" value="Globin"/>
</dbReference>
<dbReference type="InterPro" id="IPR009050">
    <property type="entry name" value="Globin-like_sf"/>
</dbReference>
<dbReference type="InterPro" id="IPR012292">
    <property type="entry name" value="Globin/Proto"/>
</dbReference>
<dbReference type="InterPro" id="IPR001032">
    <property type="entry name" value="Leghaemoglobin-like"/>
</dbReference>
<dbReference type="InterPro" id="IPR019824">
    <property type="entry name" value="Leghaemoglobin_Fe_BS"/>
</dbReference>
<dbReference type="PANTHER" id="PTHR22924">
    <property type="entry name" value="LEGHEMOGLOBIN-RELATED"/>
    <property type="match status" value="1"/>
</dbReference>
<dbReference type="PANTHER" id="PTHR22924:SF92">
    <property type="entry name" value="NON-SYMBIOTIC HEMOGLOBIN 2"/>
    <property type="match status" value="1"/>
</dbReference>
<dbReference type="Pfam" id="PF00042">
    <property type="entry name" value="Globin"/>
    <property type="match status" value="1"/>
</dbReference>
<dbReference type="PRINTS" id="PR00188">
    <property type="entry name" value="PLANTGLOBIN"/>
</dbReference>
<dbReference type="SUPFAM" id="SSF46458">
    <property type="entry name" value="Globin-like"/>
    <property type="match status" value="1"/>
</dbReference>
<dbReference type="PROSITE" id="PS01033">
    <property type="entry name" value="GLOBIN"/>
    <property type="match status" value="1"/>
</dbReference>
<dbReference type="PROSITE" id="PS00208">
    <property type="entry name" value="PLANT_GLOBIN"/>
    <property type="match status" value="1"/>
</dbReference>
<evidence type="ECO:0000250" key="1">
    <source>
        <dbReference type="UniProtKB" id="P02240"/>
    </source>
</evidence>
<evidence type="ECO:0000250" key="2">
    <source>
        <dbReference type="UniProtKB" id="Q3C1F7"/>
    </source>
</evidence>
<evidence type="ECO:0000250" key="3">
    <source>
        <dbReference type="UniProtKB" id="Q43296"/>
    </source>
</evidence>
<evidence type="ECO:0000255" key="4">
    <source>
        <dbReference type="PROSITE-ProRule" id="PRU00238"/>
    </source>
</evidence>
<evidence type="ECO:0000269" key="5">
    <source>
    </source>
</evidence>
<evidence type="ECO:0000269" key="6">
    <source>
    </source>
</evidence>
<evidence type="ECO:0000269" key="7">
    <source>
    </source>
</evidence>
<evidence type="ECO:0000269" key="8">
    <source>
    </source>
</evidence>
<evidence type="ECO:0000269" key="9">
    <source>
    </source>
</evidence>
<evidence type="ECO:0000303" key="10">
    <source>
    </source>
</evidence>
<evidence type="ECO:0000303" key="11">
    <source>
    </source>
</evidence>
<evidence type="ECO:0000303" key="12">
    <source>
    </source>
</evidence>
<evidence type="ECO:0000303" key="13">
    <source>
    </source>
</evidence>
<evidence type="ECO:0000303" key="14">
    <source>
    </source>
</evidence>
<evidence type="ECO:0000305" key="15"/>
<evidence type="ECO:0000305" key="16">
    <source>
    </source>
</evidence>
<evidence type="ECO:0000312" key="17">
    <source>
        <dbReference type="EMBL" id="KRH34686.1"/>
    </source>
</evidence>
<sequence length="144" mass="15389">MGAFTEKQEALVSSSFEAFKANIPQYSVVFYNSILEKAPAAKDLFSFLANGVDPTNPKLTGHAEKLFALVRDSAGQLKTNGTVVADAALVSIHAQKAVTDPQFVVVKEALLKTIKEAVGGNWSDELSSAWEVAYDELAAAIKKA</sequence>
<accession>P02235</accession>
<accession>A0A0R0HW65</accession>
<keyword id="KW-0007">Acetylation</keyword>
<keyword id="KW-0963">Cytoplasm</keyword>
<keyword id="KW-0349">Heme</keyword>
<keyword id="KW-0408">Iron</keyword>
<keyword id="KW-0479">Metal-binding</keyword>
<keyword id="KW-0944">Nitration</keyword>
<keyword id="KW-0535">Nitrogen fixation</keyword>
<keyword id="KW-0536">Nodulation</keyword>
<keyword id="KW-0539">Nucleus</keyword>
<keyword id="KW-0561">Oxygen transport</keyword>
<keyword id="KW-0597">Phosphoprotein</keyword>
<keyword id="KW-1185">Reference proteome</keyword>
<keyword id="KW-0813">Transport</keyword>
<proteinExistence type="evidence at protein level"/>
<feature type="initiator methionine" description="Removed" evidence="16">
    <location>
        <position position="1"/>
    </location>
</feature>
<feature type="chain" id="PRO_0000193003" description="Leghemoglobin 2">
    <location>
        <begin position="2"/>
        <end position="144"/>
    </location>
</feature>
<feature type="domain" description="Globin" evidence="4">
    <location>
        <begin position="3"/>
        <end position="144"/>
    </location>
</feature>
<feature type="binding site" evidence="1">
    <location>
        <position position="46"/>
    </location>
    <ligand>
        <name>heme b</name>
        <dbReference type="ChEBI" id="CHEBI:60344"/>
    </ligand>
</feature>
<feature type="binding site" evidence="1">
    <location>
        <position position="62"/>
    </location>
    <ligand>
        <name>O2</name>
        <dbReference type="ChEBI" id="CHEBI:15379"/>
    </ligand>
</feature>
<feature type="binding site" evidence="1">
    <location>
        <position position="65"/>
    </location>
    <ligand>
        <name>heme b</name>
        <dbReference type="ChEBI" id="CHEBI:60344"/>
    </ligand>
</feature>
<feature type="binding site" description="proximal binding residue" evidence="4">
    <location>
        <position position="93"/>
    </location>
    <ligand>
        <name>heme b</name>
        <dbReference type="ChEBI" id="CHEBI:60344"/>
    </ligand>
    <ligandPart>
        <name>Fe</name>
        <dbReference type="ChEBI" id="CHEBI:18248"/>
    </ligandPart>
</feature>
<feature type="binding site" evidence="1">
    <location>
        <position position="96"/>
    </location>
    <ligand>
        <name>heme b</name>
        <dbReference type="ChEBI" id="CHEBI:60344"/>
    </ligand>
</feature>
<feature type="modified residue" description="N-acetylglycine" evidence="7">
    <location>
        <position position="2"/>
    </location>
</feature>
<feature type="modified residue" description="Nitrated tyrosine" evidence="8">
    <location>
        <position position="26"/>
    </location>
</feature>
<feature type="modified residue" description="Nitrated tyrosine" evidence="8">
    <location>
        <position position="31"/>
    </location>
</feature>
<feature type="modified residue" description="Phosphoserine" evidence="2">
    <location>
        <position position="46"/>
    </location>
</feature>
<feature type="modified residue" description="Nitrated tyrosine" evidence="8">
    <location>
        <position position="134"/>
    </location>
</feature>